<feature type="chain" id="PRO_1000075140" description="Elongation factor 4">
    <location>
        <begin position="1"/>
        <end position="597"/>
    </location>
</feature>
<feature type="domain" description="tr-type G">
    <location>
        <begin position="2"/>
        <end position="184"/>
    </location>
</feature>
<feature type="binding site" evidence="1">
    <location>
        <begin position="14"/>
        <end position="19"/>
    </location>
    <ligand>
        <name>GTP</name>
        <dbReference type="ChEBI" id="CHEBI:37565"/>
    </ligand>
</feature>
<feature type="binding site" evidence="1">
    <location>
        <begin position="131"/>
        <end position="134"/>
    </location>
    <ligand>
        <name>GTP</name>
        <dbReference type="ChEBI" id="CHEBI:37565"/>
    </ligand>
</feature>
<evidence type="ECO:0000255" key="1">
    <source>
        <dbReference type="HAMAP-Rule" id="MF_00071"/>
    </source>
</evidence>
<protein>
    <recommendedName>
        <fullName evidence="1">Elongation factor 4</fullName>
        <shortName evidence="1">EF-4</shortName>
        <ecNumber evidence="1">3.6.5.n1</ecNumber>
    </recommendedName>
    <alternativeName>
        <fullName evidence="1">Ribosomal back-translocase LepA</fullName>
    </alternativeName>
</protein>
<name>LEPA_NEIM0</name>
<accession>A9M3J8</accession>
<gene>
    <name evidence="1" type="primary">lepA</name>
    <name type="ordered locus">NMCC_0730</name>
</gene>
<dbReference type="EC" id="3.6.5.n1" evidence="1"/>
<dbReference type="EMBL" id="CP000381">
    <property type="protein sequence ID" value="ABX72923.1"/>
    <property type="molecule type" value="Genomic_DNA"/>
</dbReference>
<dbReference type="RefSeq" id="WP_002219536.1">
    <property type="nucleotide sequence ID" value="NC_010120.1"/>
</dbReference>
<dbReference type="SMR" id="A9M3J8"/>
<dbReference type="KEGG" id="nmn:NMCC_0730"/>
<dbReference type="HOGENOM" id="CLU_009995_3_3_4"/>
<dbReference type="Proteomes" id="UP000001177">
    <property type="component" value="Chromosome"/>
</dbReference>
<dbReference type="GO" id="GO:0005886">
    <property type="term" value="C:plasma membrane"/>
    <property type="evidence" value="ECO:0007669"/>
    <property type="project" value="UniProtKB-SubCell"/>
</dbReference>
<dbReference type="GO" id="GO:0005525">
    <property type="term" value="F:GTP binding"/>
    <property type="evidence" value="ECO:0007669"/>
    <property type="project" value="UniProtKB-UniRule"/>
</dbReference>
<dbReference type="GO" id="GO:0003924">
    <property type="term" value="F:GTPase activity"/>
    <property type="evidence" value="ECO:0007669"/>
    <property type="project" value="UniProtKB-UniRule"/>
</dbReference>
<dbReference type="GO" id="GO:0097216">
    <property type="term" value="F:guanosine tetraphosphate binding"/>
    <property type="evidence" value="ECO:0007669"/>
    <property type="project" value="UniProtKB-ARBA"/>
</dbReference>
<dbReference type="GO" id="GO:0043022">
    <property type="term" value="F:ribosome binding"/>
    <property type="evidence" value="ECO:0007669"/>
    <property type="project" value="UniProtKB-UniRule"/>
</dbReference>
<dbReference type="GO" id="GO:0003746">
    <property type="term" value="F:translation elongation factor activity"/>
    <property type="evidence" value="ECO:0007669"/>
    <property type="project" value="UniProtKB-UniRule"/>
</dbReference>
<dbReference type="GO" id="GO:0045727">
    <property type="term" value="P:positive regulation of translation"/>
    <property type="evidence" value="ECO:0007669"/>
    <property type="project" value="UniProtKB-UniRule"/>
</dbReference>
<dbReference type="CDD" id="cd03699">
    <property type="entry name" value="EF4_II"/>
    <property type="match status" value="1"/>
</dbReference>
<dbReference type="CDD" id="cd16260">
    <property type="entry name" value="EF4_III"/>
    <property type="match status" value="1"/>
</dbReference>
<dbReference type="CDD" id="cd01890">
    <property type="entry name" value="LepA"/>
    <property type="match status" value="1"/>
</dbReference>
<dbReference type="CDD" id="cd03709">
    <property type="entry name" value="lepA_C"/>
    <property type="match status" value="1"/>
</dbReference>
<dbReference type="FunFam" id="3.40.50.300:FF:000078">
    <property type="entry name" value="Elongation factor 4"/>
    <property type="match status" value="1"/>
</dbReference>
<dbReference type="FunFam" id="2.40.30.10:FF:000015">
    <property type="entry name" value="Translation factor GUF1, mitochondrial"/>
    <property type="match status" value="1"/>
</dbReference>
<dbReference type="FunFam" id="3.30.70.240:FF:000007">
    <property type="entry name" value="Translation factor GUF1, mitochondrial"/>
    <property type="match status" value="1"/>
</dbReference>
<dbReference type="FunFam" id="3.30.70.2570:FF:000001">
    <property type="entry name" value="Translation factor GUF1, mitochondrial"/>
    <property type="match status" value="1"/>
</dbReference>
<dbReference type="FunFam" id="3.30.70.870:FF:000004">
    <property type="entry name" value="Translation factor GUF1, mitochondrial"/>
    <property type="match status" value="1"/>
</dbReference>
<dbReference type="Gene3D" id="3.30.70.240">
    <property type="match status" value="1"/>
</dbReference>
<dbReference type="Gene3D" id="3.30.70.2570">
    <property type="entry name" value="Elongation factor 4, C-terminal domain"/>
    <property type="match status" value="1"/>
</dbReference>
<dbReference type="Gene3D" id="3.30.70.870">
    <property type="entry name" value="Elongation Factor G (Translational Gtpase), domain 3"/>
    <property type="match status" value="1"/>
</dbReference>
<dbReference type="Gene3D" id="3.40.50.300">
    <property type="entry name" value="P-loop containing nucleotide triphosphate hydrolases"/>
    <property type="match status" value="1"/>
</dbReference>
<dbReference type="Gene3D" id="2.40.30.10">
    <property type="entry name" value="Translation factors"/>
    <property type="match status" value="1"/>
</dbReference>
<dbReference type="HAMAP" id="MF_00071">
    <property type="entry name" value="LepA"/>
    <property type="match status" value="1"/>
</dbReference>
<dbReference type="InterPro" id="IPR006297">
    <property type="entry name" value="EF-4"/>
</dbReference>
<dbReference type="InterPro" id="IPR035647">
    <property type="entry name" value="EFG_III/V"/>
</dbReference>
<dbReference type="InterPro" id="IPR000640">
    <property type="entry name" value="EFG_V-like"/>
</dbReference>
<dbReference type="InterPro" id="IPR004161">
    <property type="entry name" value="EFTu-like_2"/>
</dbReference>
<dbReference type="InterPro" id="IPR031157">
    <property type="entry name" value="G_TR_CS"/>
</dbReference>
<dbReference type="InterPro" id="IPR038363">
    <property type="entry name" value="LepA_C_sf"/>
</dbReference>
<dbReference type="InterPro" id="IPR013842">
    <property type="entry name" value="LepA_CTD"/>
</dbReference>
<dbReference type="InterPro" id="IPR035654">
    <property type="entry name" value="LepA_IV"/>
</dbReference>
<dbReference type="InterPro" id="IPR027417">
    <property type="entry name" value="P-loop_NTPase"/>
</dbReference>
<dbReference type="InterPro" id="IPR005225">
    <property type="entry name" value="Small_GTP-bd"/>
</dbReference>
<dbReference type="InterPro" id="IPR000795">
    <property type="entry name" value="T_Tr_GTP-bd_dom"/>
</dbReference>
<dbReference type="InterPro" id="IPR009000">
    <property type="entry name" value="Transl_B-barrel_sf"/>
</dbReference>
<dbReference type="NCBIfam" id="TIGR01393">
    <property type="entry name" value="lepA"/>
    <property type="match status" value="1"/>
</dbReference>
<dbReference type="NCBIfam" id="TIGR00231">
    <property type="entry name" value="small_GTP"/>
    <property type="match status" value="1"/>
</dbReference>
<dbReference type="PANTHER" id="PTHR43512:SF4">
    <property type="entry name" value="TRANSLATION FACTOR GUF1 HOMOLOG, CHLOROPLASTIC"/>
    <property type="match status" value="1"/>
</dbReference>
<dbReference type="PANTHER" id="PTHR43512">
    <property type="entry name" value="TRANSLATION FACTOR GUF1-RELATED"/>
    <property type="match status" value="1"/>
</dbReference>
<dbReference type="Pfam" id="PF00679">
    <property type="entry name" value="EFG_C"/>
    <property type="match status" value="1"/>
</dbReference>
<dbReference type="Pfam" id="PF00009">
    <property type="entry name" value="GTP_EFTU"/>
    <property type="match status" value="1"/>
</dbReference>
<dbReference type="Pfam" id="PF03144">
    <property type="entry name" value="GTP_EFTU_D2"/>
    <property type="match status" value="1"/>
</dbReference>
<dbReference type="Pfam" id="PF06421">
    <property type="entry name" value="LepA_C"/>
    <property type="match status" value="1"/>
</dbReference>
<dbReference type="PRINTS" id="PR00315">
    <property type="entry name" value="ELONGATNFCT"/>
</dbReference>
<dbReference type="SMART" id="SM00838">
    <property type="entry name" value="EFG_C"/>
    <property type="match status" value="1"/>
</dbReference>
<dbReference type="SUPFAM" id="SSF54980">
    <property type="entry name" value="EF-G C-terminal domain-like"/>
    <property type="match status" value="2"/>
</dbReference>
<dbReference type="SUPFAM" id="SSF52540">
    <property type="entry name" value="P-loop containing nucleoside triphosphate hydrolases"/>
    <property type="match status" value="1"/>
</dbReference>
<dbReference type="SUPFAM" id="SSF50447">
    <property type="entry name" value="Translation proteins"/>
    <property type="match status" value="1"/>
</dbReference>
<dbReference type="PROSITE" id="PS00301">
    <property type="entry name" value="G_TR_1"/>
    <property type="match status" value="1"/>
</dbReference>
<dbReference type="PROSITE" id="PS51722">
    <property type="entry name" value="G_TR_2"/>
    <property type="match status" value="1"/>
</dbReference>
<proteinExistence type="inferred from homology"/>
<comment type="function">
    <text evidence="1">Required for accurate and efficient protein synthesis under certain stress conditions. May act as a fidelity factor of the translation reaction, by catalyzing a one-codon backward translocation of tRNAs on improperly translocated ribosomes. Back-translocation proceeds from a post-translocation (POST) complex to a pre-translocation (PRE) complex, thus giving elongation factor G a second chance to translocate the tRNAs correctly. Binds to ribosomes in a GTP-dependent manner.</text>
</comment>
<comment type="catalytic activity">
    <reaction evidence="1">
        <text>GTP + H2O = GDP + phosphate + H(+)</text>
        <dbReference type="Rhea" id="RHEA:19669"/>
        <dbReference type="ChEBI" id="CHEBI:15377"/>
        <dbReference type="ChEBI" id="CHEBI:15378"/>
        <dbReference type="ChEBI" id="CHEBI:37565"/>
        <dbReference type="ChEBI" id="CHEBI:43474"/>
        <dbReference type="ChEBI" id="CHEBI:58189"/>
        <dbReference type="EC" id="3.6.5.n1"/>
    </reaction>
</comment>
<comment type="subcellular location">
    <subcellularLocation>
        <location evidence="1">Cell inner membrane</location>
        <topology evidence="1">Peripheral membrane protein</topology>
        <orientation evidence="1">Cytoplasmic side</orientation>
    </subcellularLocation>
</comment>
<comment type="similarity">
    <text evidence="1">Belongs to the TRAFAC class translation factor GTPase superfamily. Classic translation factor GTPase family. LepA subfamily.</text>
</comment>
<reference key="1">
    <citation type="journal article" date="2008" name="Genomics">
        <title>Characterization of ST-4821 complex, a unique Neisseria meningitidis clone.</title>
        <authorList>
            <person name="Peng J."/>
            <person name="Yang L."/>
            <person name="Yang F."/>
            <person name="Yang J."/>
            <person name="Yan Y."/>
            <person name="Nie H."/>
            <person name="Zhang X."/>
            <person name="Xiong Z."/>
            <person name="Jiang Y."/>
            <person name="Cheng F."/>
            <person name="Xu X."/>
            <person name="Chen S."/>
            <person name="Sun L."/>
            <person name="Li W."/>
            <person name="Shen Y."/>
            <person name="Shao Z."/>
            <person name="Liang X."/>
            <person name="Xu J."/>
            <person name="Jin Q."/>
        </authorList>
    </citation>
    <scope>NUCLEOTIDE SEQUENCE [LARGE SCALE GENOMIC DNA]</scope>
    <source>
        <strain>053442</strain>
    </source>
</reference>
<organism>
    <name type="scientific">Neisseria meningitidis serogroup C (strain 053442)</name>
    <dbReference type="NCBI Taxonomy" id="374833"/>
    <lineage>
        <taxon>Bacteria</taxon>
        <taxon>Pseudomonadati</taxon>
        <taxon>Pseudomonadota</taxon>
        <taxon>Betaproteobacteria</taxon>
        <taxon>Neisseriales</taxon>
        <taxon>Neisseriaceae</taxon>
        <taxon>Neisseria</taxon>
    </lineage>
</organism>
<keyword id="KW-0997">Cell inner membrane</keyword>
<keyword id="KW-1003">Cell membrane</keyword>
<keyword id="KW-0342">GTP-binding</keyword>
<keyword id="KW-0378">Hydrolase</keyword>
<keyword id="KW-0472">Membrane</keyword>
<keyword id="KW-0547">Nucleotide-binding</keyword>
<keyword id="KW-0648">Protein biosynthesis</keyword>
<sequence>MKNIRNFSIIAHIDHGKSTLADRFIQYCGGLDLREMSTQVLDSMDIEKERGITIKAQTAALNYKARDGQVYQLNLIDTPGHVDFSYEVSRSLSACEGALLVVDASQGVEAQTVANCYTAIDLGVEVVPVLNKIDLPAADPERVEQEIEDIIGIDAVGAVQCSAKSGIGVEDVLEEIVAKIPAPTGDENAPLQAVIVDSWFDNYVGVVMLIRVKNGTIKLKDKVRFMSTKAETQVEQLGVFTPKSVQKQELKAGEVGFLITGVKELGQAKVGDTVTLVANPATEPLPGFQEVQSQVFAGLYPVESHDYEALRDALEKLQLNDASLKFEPEVSQALGFGFRCGFLGLLHLEIVQERLEREFDMDLITTAPTVVYEVVLKNGEKIEVENPSKLPDIGSIETILEPIITATILVPQEYVGNVMTLCNQKRGVQVNMQYMGRQVMLTYDLPMNEVVMDFFDKLKSTSRGYASLDYHFKEFQPSDLIKLDIMVNGEKVDALSLIVHRQSAVHRGRELASKMRELIPRQMFDIAVQAAIGSQIIARENVKALRKNVLAKCYGGDITRKKKLLEKQKAGKRRMKQVGNVEIPQSAFLAILQVSDK</sequence>